<protein>
    <recommendedName>
        <fullName>Hemoglobin subunit beta</fullName>
    </recommendedName>
    <alternativeName>
        <fullName>Beta-globin</fullName>
    </alternativeName>
    <alternativeName>
        <fullName>Hemoglobin beta chain</fullName>
    </alternativeName>
</protein>
<dbReference type="EMBL" id="X02345">
    <property type="protein sequence ID" value="CAA26204.1"/>
    <property type="status" value="ALT_SEQ"/>
    <property type="molecule type" value="Genomic_DNA"/>
</dbReference>
<dbReference type="PIR" id="B93303">
    <property type="entry name" value="HBCZ"/>
</dbReference>
<dbReference type="RefSeq" id="XP_508242.1">
    <property type="nucleotide sequence ID" value="XM_508242.5"/>
</dbReference>
<dbReference type="SMR" id="P68873"/>
<dbReference type="FunCoup" id="P68873">
    <property type="interactions" value="35"/>
</dbReference>
<dbReference type="STRING" id="9598.ENSPTRP00000005700"/>
<dbReference type="PaxDb" id="9598-ENSPTRP00000005700"/>
<dbReference type="Ensembl" id="ENSPTRT00000006177.4">
    <property type="protein sequence ID" value="ENSPTRP00000005700.3"/>
    <property type="gene ID" value="ENSPTRG00000040047.2"/>
</dbReference>
<dbReference type="GeneID" id="450978"/>
<dbReference type="KEGG" id="ptr:450978"/>
<dbReference type="CTD" id="3043"/>
<dbReference type="VGNC" id="VGNC:3255">
    <property type="gene designation" value="HBB"/>
</dbReference>
<dbReference type="eggNOG" id="KOG3378">
    <property type="taxonomic scope" value="Eukaryota"/>
</dbReference>
<dbReference type="GeneTree" id="ENSGT00940000163476"/>
<dbReference type="HOGENOM" id="CLU_003827_10_0_1"/>
<dbReference type="InParanoid" id="P68873"/>
<dbReference type="OMA" id="HAIVSIW"/>
<dbReference type="OrthoDB" id="968at9604"/>
<dbReference type="TreeFam" id="TF333268"/>
<dbReference type="Proteomes" id="UP000002277">
    <property type="component" value="Chromosome 11"/>
</dbReference>
<dbReference type="Bgee" id="ENSPTRG00000040047">
    <property type="expression patterns" value="Expressed in bone marrow and 20 other cell types or tissues"/>
</dbReference>
<dbReference type="GO" id="GO:0005615">
    <property type="term" value="C:extracellular space"/>
    <property type="evidence" value="ECO:0007669"/>
    <property type="project" value="Ensembl"/>
</dbReference>
<dbReference type="GO" id="GO:0031838">
    <property type="term" value="C:haptoglobin-hemoglobin complex"/>
    <property type="evidence" value="ECO:0000318"/>
    <property type="project" value="GO_Central"/>
</dbReference>
<dbReference type="GO" id="GO:0005833">
    <property type="term" value="C:hemoglobin complex"/>
    <property type="evidence" value="ECO:0000318"/>
    <property type="project" value="GO_Central"/>
</dbReference>
<dbReference type="GO" id="GO:0031720">
    <property type="term" value="F:haptoglobin binding"/>
    <property type="evidence" value="ECO:0007669"/>
    <property type="project" value="Ensembl"/>
</dbReference>
<dbReference type="GO" id="GO:0020037">
    <property type="term" value="F:heme binding"/>
    <property type="evidence" value="ECO:0000318"/>
    <property type="project" value="GO_Central"/>
</dbReference>
<dbReference type="GO" id="GO:0031721">
    <property type="term" value="F:hemoglobin alpha binding"/>
    <property type="evidence" value="ECO:0000318"/>
    <property type="project" value="GO_Central"/>
</dbReference>
<dbReference type="GO" id="GO:0046872">
    <property type="term" value="F:metal ion binding"/>
    <property type="evidence" value="ECO:0007669"/>
    <property type="project" value="UniProtKB-KW"/>
</dbReference>
<dbReference type="GO" id="GO:0019825">
    <property type="term" value="F:oxygen binding"/>
    <property type="evidence" value="ECO:0000318"/>
    <property type="project" value="GO_Central"/>
</dbReference>
<dbReference type="GO" id="GO:0005344">
    <property type="term" value="F:oxygen carrier activity"/>
    <property type="evidence" value="ECO:0000318"/>
    <property type="project" value="GO_Central"/>
</dbReference>
<dbReference type="GO" id="GO:0004601">
    <property type="term" value="F:peroxidase activity"/>
    <property type="evidence" value="ECO:0007669"/>
    <property type="project" value="Ensembl"/>
</dbReference>
<dbReference type="GO" id="GO:0042744">
    <property type="term" value="P:hydrogen peroxide catabolic process"/>
    <property type="evidence" value="ECO:0000318"/>
    <property type="project" value="GO_Central"/>
</dbReference>
<dbReference type="GO" id="GO:0030185">
    <property type="term" value="P:nitric oxide transport"/>
    <property type="evidence" value="ECO:0007669"/>
    <property type="project" value="Ensembl"/>
</dbReference>
<dbReference type="GO" id="GO:0070293">
    <property type="term" value="P:renal absorption"/>
    <property type="evidence" value="ECO:0007669"/>
    <property type="project" value="Ensembl"/>
</dbReference>
<dbReference type="GO" id="GO:0042542">
    <property type="term" value="P:response to hydrogen peroxide"/>
    <property type="evidence" value="ECO:0007669"/>
    <property type="project" value="Ensembl"/>
</dbReference>
<dbReference type="CDD" id="cd08925">
    <property type="entry name" value="Hb-beta-like"/>
    <property type="match status" value="1"/>
</dbReference>
<dbReference type="FunFam" id="1.10.490.10:FF:000001">
    <property type="entry name" value="Hemoglobin subunit beta"/>
    <property type="match status" value="1"/>
</dbReference>
<dbReference type="Gene3D" id="1.10.490.10">
    <property type="entry name" value="Globins"/>
    <property type="match status" value="1"/>
</dbReference>
<dbReference type="InterPro" id="IPR000971">
    <property type="entry name" value="Globin"/>
</dbReference>
<dbReference type="InterPro" id="IPR009050">
    <property type="entry name" value="Globin-like_sf"/>
</dbReference>
<dbReference type="InterPro" id="IPR012292">
    <property type="entry name" value="Globin/Proto"/>
</dbReference>
<dbReference type="InterPro" id="IPR002337">
    <property type="entry name" value="Hemoglobin_b"/>
</dbReference>
<dbReference type="InterPro" id="IPR050056">
    <property type="entry name" value="Hemoglobin_oxygen_transport"/>
</dbReference>
<dbReference type="PANTHER" id="PTHR11442">
    <property type="entry name" value="HEMOGLOBIN FAMILY MEMBER"/>
    <property type="match status" value="1"/>
</dbReference>
<dbReference type="PANTHER" id="PTHR11442:SF42">
    <property type="entry name" value="HEMOGLOBIN SUBUNIT BETA"/>
    <property type="match status" value="1"/>
</dbReference>
<dbReference type="Pfam" id="PF00042">
    <property type="entry name" value="Globin"/>
    <property type="match status" value="1"/>
</dbReference>
<dbReference type="PRINTS" id="PR00814">
    <property type="entry name" value="BETAHAEM"/>
</dbReference>
<dbReference type="SUPFAM" id="SSF46458">
    <property type="entry name" value="Globin-like"/>
    <property type="match status" value="1"/>
</dbReference>
<dbReference type="PROSITE" id="PS01033">
    <property type="entry name" value="GLOBIN"/>
    <property type="match status" value="1"/>
</dbReference>
<gene>
    <name type="primary">HBB</name>
</gene>
<keyword id="KW-0007">Acetylation</keyword>
<keyword id="KW-0903">Direct protein sequencing</keyword>
<keyword id="KW-0349">Heme</keyword>
<keyword id="KW-0408">Iron</keyword>
<keyword id="KW-0479">Metal-binding</keyword>
<keyword id="KW-0561">Oxygen transport</keyword>
<keyword id="KW-0597">Phosphoprotein</keyword>
<keyword id="KW-1185">Reference proteome</keyword>
<keyword id="KW-0702">S-nitrosylation</keyword>
<keyword id="KW-0813">Transport</keyword>
<organism>
    <name type="scientific">Pan troglodytes</name>
    <name type="common">Chimpanzee</name>
    <dbReference type="NCBI Taxonomy" id="9598"/>
    <lineage>
        <taxon>Eukaryota</taxon>
        <taxon>Metazoa</taxon>
        <taxon>Chordata</taxon>
        <taxon>Craniata</taxon>
        <taxon>Vertebrata</taxon>
        <taxon>Euteleostomi</taxon>
        <taxon>Mammalia</taxon>
        <taxon>Eutheria</taxon>
        <taxon>Euarchontoglires</taxon>
        <taxon>Primates</taxon>
        <taxon>Haplorrhini</taxon>
        <taxon>Catarrhini</taxon>
        <taxon>Hominidae</taxon>
        <taxon>Pan</taxon>
    </lineage>
</organism>
<proteinExistence type="evidence at protein level"/>
<reference key="1">
    <citation type="journal article" date="1985" name="J. Mol. Biol.">
        <title>Evolution of the primate beta-globin gene region. High rate of variation in CpG dinucleotides and in short repeated sequences between man and chimpanzee.</title>
        <authorList>
            <person name="Savatier P."/>
            <person name="Trabuchet G."/>
            <person name="Faure C."/>
            <person name="Chebloune Y."/>
            <person name="Gouy M."/>
            <person name="Verdier G."/>
            <person name="Nigon V.M."/>
        </authorList>
    </citation>
    <scope>NUCLEOTIDE SEQUENCE [GENOMIC DNA] OF 1-121</scope>
</reference>
<reference key="2">
    <citation type="journal article" date="1965" name="Biochim. Biophys. Acta">
        <title>The characterization of the tryptic peptides from the hemoglobin of the chimpanzee (Pan troglodytes).</title>
        <authorList>
            <person name="Rifkin D.B."/>
            <person name="Konigsberg W."/>
        </authorList>
    </citation>
    <scope>PROTEIN SEQUENCE OF 2-147</scope>
</reference>
<evidence type="ECO:0000250" key="1">
    <source>
        <dbReference type="UniProtKB" id="P02086"/>
    </source>
</evidence>
<evidence type="ECO:0000250" key="2">
    <source>
        <dbReference type="UniProtKB" id="P68871"/>
    </source>
</evidence>
<evidence type="ECO:0000255" key="3">
    <source>
        <dbReference type="PROSITE-ProRule" id="PRU00238"/>
    </source>
</evidence>
<evidence type="ECO:0000269" key="4">
    <source>
    </source>
</evidence>
<evidence type="ECO:0000305" key="5"/>
<sequence>MVHLTPEEKSAVTALWGKVNVDEVGGEALGRLLVVYPWTQRFFESFGDLSTPDAVMGNPKVKAHGKKVLGAFSDGLAHLDNLKGTFATLSELHCDKLHVDPENFRLLGNVLVCVLAHHFGKEFTPPVQAAYQKVVAGVANALAHKYH</sequence>
<comment type="function">
    <text>Involved in oxygen transport from the lung to the various peripheral tissues.</text>
</comment>
<comment type="subunit">
    <text>Heterotetramer of two alpha chains and two beta chains in adult hemoglobin A (HbA).</text>
</comment>
<comment type="tissue specificity">
    <text>Red blood cells.</text>
</comment>
<comment type="similarity">
    <text evidence="3">Belongs to the globin family.</text>
</comment>
<comment type="sequence caution" evidence="5">
    <conflict type="erroneous gene model prediction">
        <sequence resource="EMBL-CDS" id="CAA26204"/>
    </conflict>
</comment>
<name>HBB_PANTR</name>
<accession>P68873</accession>
<accession>P02023</accession>
<accession>Q13852</accession>
<accession>Q14481</accession>
<accession>Q14510</accession>
<accession>Q28799</accession>
<accession>Q9BX96</accession>
<accession>Q9UCP8</accession>
<accession>Q9UCP9</accession>
<feature type="initiator methionine" description="Removed" evidence="1 4">
    <location>
        <position position="1"/>
    </location>
</feature>
<feature type="chain" id="PRO_0000053060" description="Hemoglobin subunit beta">
    <location>
        <begin position="2"/>
        <end position="147"/>
    </location>
</feature>
<feature type="domain" description="Globin" evidence="3">
    <location>
        <begin position="3"/>
        <end position="147"/>
    </location>
</feature>
<feature type="binding site" description="distal binding residue">
    <location>
        <position position="64"/>
    </location>
    <ligand>
        <name>heme b</name>
        <dbReference type="ChEBI" id="CHEBI:60344"/>
    </ligand>
    <ligandPart>
        <name>Fe</name>
        <dbReference type="ChEBI" id="CHEBI:18248"/>
    </ligandPart>
</feature>
<feature type="binding site" description="proximal binding residue">
    <location>
        <position position="93"/>
    </location>
    <ligand>
        <name>heme b</name>
        <dbReference type="ChEBI" id="CHEBI:60344"/>
    </ligand>
    <ligandPart>
        <name>Fe</name>
        <dbReference type="ChEBI" id="CHEBI:18248"/>
    </ligandPart>
</feature>
<feature type="modified residue" description="N-acetylvaline" evidence="1">
    <location>
        <position position="2"/>
    </location>
</feature>
<feature type="modified residue" description="Phosphothreonine" evidence="2">
    <location>
        <position position="13"/>
    </location>
</feature>
<feature type="modified residue" description="Phosphoserine" evidence="2">
    <location>
        <position position="45"/>
    </location>
</feature>
<feature type="modified residue" description="N6-acetyllysine" evidence="2">
    <location>
        <position position="60"/>
    </location>
</feature>
<feature type="modified residue" description="N6-acetyllysine" evidence="2">
    <location>
        <position position="83"/>
    </location>
</feature>
<feature type="modified residue" description="S-nitrosocysteine" evidence="2">
    <location>
        <position position="94"/>
    </location>
</feature>
<feature type="modified residue" description="N6-acetyllysine" evidence="2">
    <location>
        <position position="145"/>
    </location>
</feature>